<protein>
    <recommendedName>
        <fullName>Interferon alpha-21</fullName>
        <shortName>IFN-alpha-21</shortName>
    </recommendedName>
    <alternativeName>
        <fullName>Interferon alpha-F</fullName>
        <shortName>LeIF F</shortName>
    </alternativeName>
</protein>
<reference key="1">
    <citation type="journal article" date="1981" name="Nature">
        <title>The structure of eight distinct cloned human leukocyte interferon cDNAs.</title>
        <authorList>
            <person name="Goeddel D.V."/>
            <person name="Leung D.W."/>
            <person name="Dull T.J."/>
            <person name="Gross M."/>
            <person name="Lawn R.M."/>
            <person name="McCandliss R."/>
            <person name="Seeburg P.H."/>
            <person name="Ullrich A."/>
            <person name="Yelverton E."/>
            <person name="Gray P.W."/>
        </authorList>
    </citation>
    <scope>NUCLEOTIDE SEQUENCE [MRNA]</scope>
    <scope>VARIANT MET-119</scope>
</reference>
<reference key="2">
    <citation type="journal article" date="1983" name="Dokl. Biochem.">
        <title>A new type of leukocytic interferon.</title>
        <authorList>
            <person name="Gren E.Y."/>
            <person name="Berzin V.M."/>
            <person name="Tsimanis A.Y."/>
            <person name="Apsalon U.R."/>
            <person name="Vishnevskii Y.I."/>
            <person name="Yansone I.V."/>
            <person name="Dishler A.V."/>
            <person name="Pudova N.V."/>
            <person name="Smorodintsev A.A."/>
            <person name="Iovlev V.I."/>
            <person name="Stepanov A.N."/>
            <person name="Feldmane G.Y."/>
            <person name="Meldrais Y.A."/>
            <person name="Lozha V.P."/>
            <person name="Kavsan V.M."/>
            <person name="Efimov V.A."/>
            <person name="Sverdlov E.D."/>
        </authorList>
    </citation>
    <scope>NUCLEOTIDE SEQUENCE [MRNA]</scope>
</reference>
<reference key="3">
    <citation type="journal article" date="1984" name="J. Interferon Res.">
        <title>Novel human leukocyte interferon subtype and structural comparison of alpha interferon genes.</title>
        <authorList>
            <person name="Gren E."/>
            <person name="Berzin V.M."/>
            <person name="Jansone I."/>
            <person name="Tsimanis A."/>
            <person name="Vishnevsky Y."/>
            <person name="Apsalons U."/>
        </authorList>
    </citation>
    <scope>NUCLEOTIDE SEQUENCE [MRNA]</scope>
</reference>
<reference key="4">
    <citation type="journal article" date="2004" name="Nature">
        <title>DNA sequence and analysis of human chromosome 9.</title>
        <authorList>
            <person name="Humphray S.J."/>
            <person name="Oliver K."/>
            <person name="Hunt A.R."/>
            <person name="Plumb R.W."/>
            <person name="Loveland J.E."/>
            <person name="Howe K.L."/>
            <person name="Andrews T.D."/>
            <person name="Searle S."/>
            <person name="Hunt S.E."/>
            <person name="Scott C.E."/>
            <person name="Jones M.C."/>
            <person name="Ainscough R."/>
            <person name="Almeida J.P."/>
            <person name="Ambrose K.D."/>
            <person name="Ashwell R.I.S."/>
            <person name="Babbage A.K."/>
            <person name="Babbage S."/>
            <person name="Bagguley C.L."/>
            <person name="Bailey J."/>
            <person name="Banerjee R."/>
            <person name="Barker D.J."/>
            <person name="Barlow K.F."/>
            <person name="Bates K."/>
            <person name="Beasley H."/>
            <person name="Beasley O."/>
            <person name="Bird C.P."/>
            <person name="Bray-Allen S."/>
            <person name="Brown A.J."/>
            <person name="Brown J.Y."/>
            <person name="Burford D."/>
            <person name="Burrill W."/>
            <person name="Burton J."/>
            <person name="Carder C."/>
            <person name="Carter N.P."/>
            <person name="Chapman J.C."/>
            <person name="Chen Y."/>
            <person name="Clarke G."/>
            <person name="Clark S.Y."/>
            <person name="Clee C.M."/>
            <person name="Clegg S."/>
            <person name="Collier R.E."/>
            <person name="Corby N."/>
            <person name="Crosier M."/>
            <person name="Cummings A.T."/>
            <person name="Davies J."/>
            <person name="Dhami P."/>
            <person name="Dunn M."/>
            <person name="Dutta I."/>
            <person name="Dyer L.W."/>
            <person name="Earthrowl M.E."/>
            <person name="Faulkner L."/>
            <person name="Fleming C.J."/>
            <person name="Frankish A."/>
            <person name="Frankland J.A."/>
            <person name="French L."/>
            <person name="Fricker D.G."/>
            <person name="Garner P."/>
            <person name="Garnett J."/>
            <person name="Ghori J."/>
            <person name="Gilbert J.G.R."/>
            <person name="Glison C."/>
            <person name="Grafham D.V."/>
            <person name="Gribble S."/>
            <person name="Griffiths C."/>
            <person name="Griffiths-Jones S."/>
            <person name="Grocock R."/>
            <person name="Guy J."/>
            <person name="Hall R.E."/>
            <person name="Hammond S."/>
            <person name="Harley J.L."/>
            <person name="Harrison E.S.I."/>
            <person name="Hart E.A."/>
            <person name="Heath P.D."/>
            <person name="Henderson C.D."/>
            <person name="Hopkins B.L."/>
            <person name="Howard P.J."/>
            <person name="Howden P.J."/>
            <person name="Huckle E."/>
            <person name="Johnson C."/>
            <person name="Johnson D."/>
            <person name="Joy A.A."/>
            <person name="Kay M."/>
            <person name="Keenan S."/>
            <person name="Kershaw J.K."/>
            <person name="Kimberley A.M."/>
            <person name="King A."/>
            <person name="Knights A."/>
            <person name="Laird G.K."/>
            <person name="Langford C."/>
            <person name="Lawlor S."/>
            <person name="Leongamornlert D.A."/>
            <person name="Leversha M."/>
            <person name="Lloyd C."/>
            <person name="Lloyd D.M."/>
            <person name="Lovell J."/>
            <person name="Martin S."/>
            <person name="Mashreghi-Mohammadi M."/>
            <person name="Matthews L."/>
            <person name="McLaren S."/>
            <person name="McLay K.E."/>
            <person name="McMurray A."/>
            <person name="Milne S."/>
            <person name="Nickerson T."/>
            <person name="Nisbett J."/>
            <person name="Nordsiek G."/>
            <person name="Pearce A.V."/>
            <person name="Peck A.I."/>
            <person name="Porter K.M."/>
            <person name="Pandian R."/>
            <person name="Pelan S."/>
            <person name="Phillimore B."/>
            <person name="Povey S."/>
            <person name="Ramsey Y."/>
            <person name="Rand V."/>
            <person name="Scharfe M."/>
            <person name="Sehra H.K."/>
            <person name="Shownkeen R."/>
            <person name="Sims S.K."/>
            <person name="Skuce C.D."/>
            <person name="Smith M."/>
            <person name="Steward C.A."/>
            <person name="Swarbreck D."/>
            <person name="Sycamore N."/>
            <person name="Tester J."/>
            <person name="Thorpe A."/>
            <person name="Tracey A."/>
            <person name="Tromans A."/>
            <person name="Thomas D.W."/>
            <person name="Wall M."/>
            <person name="Wallis J.M."/>
            <person name="West A.P."/>
            <person name="Whitehead S.L."/>
            <person name="Willey D.L."/>
            <person name="Williams S.A."/>
            <person name="Wilming L."/>
            <person name="Wray P.W."/>
            <person name="Young L."/>
            <person name="Ashurst J.L."/>
            <person name="Coulson A."/>
            <person name="Blocker H."/>
            <person name="Durbin R.M."/>
            <person name="Sulston J.E."/>
            <person name="Hubbard T."/>
            <person name="Jackson M.J."/>
            <person name="Bentley D.R."/>
            <person name="Beck S."/>
            <person name="Rogers J."/>
            <person name="Dunham I."/>
        </authorList>
    </citation>
    <scope>NUCLEOTIDE SEQUENCE [LARGE SCALE GENOMIC DNA]</scope>
</reference>
<reference key="5">
    <citation type="submission" date="2005-09" db="EMBL/GenBank/DDBJ databases">
        <authorList>
            <person name="Mural R.J."/>
            <person name="Istrail S."/>
            <person name="Sutton G.G."/>
            <person name="Florea L."/>
            <person name="Halpern A.L."/>
            <person name="Mobarry C.M."/>
            <person name="Lippert R."/>
            <person name="Walenz B."/>
            <person name="Shatkay H."/>
            <person name="Dew I."/>
            <person name="Miller J.R."/>
            <person name="Flanigan M.J."/>
            <person name="Edwards N.J."/>
            <person name="Bolanos R."/>
            <person name="Fasulo D."/>
            <person name="Halldorsson B.V."/>
            <person name="Hannenhalli S."/>
            <person name="Turner R."/>
            <person name="Yooseph S."/>
            <person name="Lu F."/>
            <person name="Nusskern D.R."/>
            <person name="Shue B.C."/>
            <person name="Zheng X.H."/>
            <person name="Zhong F."/>
            <person name="Delcher A.L."/>
            <person name="Huson D.H."/>
            <person name="Kravitz S.A."/>
            <person name="Mouchard L."/>
            <person name="Reinert K."/>
            <person name="Remington K.A."/>
            <person name="Clark A.G."/>
            <person name="Waterman M.S."/>
            <person name="Eichler E.E."/>
            <person name="Adams M.D."/>
            <person name="Hunkapiller M.W."/>
            <person name="Myers E.W."/>
            <person name="Venter J.C."/>
        </authorList>
    </citation>
    <scope>NUCLEOTIDE SEQUENCE [LARGE SCALE GENOMIC DNA]</scope>
</reference>
<reference key="6">
    <citation type="journal article" date="2004" name="Genome Res.">
        <title>The status, quality, and expansion of the NIH full-length cDNA project: the Mammalian Gene Collection (MGC).</title>
        <authorList>
            <consortium name="The MGC Project Team"/>
        </authorList>
    </citation>
    <scope>NUCLEOTIDE SEQUENCE [LARGE SCALE MRNA]</scope>
</reference>
<reference key="7">
    <citation type="journal article" date="1987" name="FEBS Lett.">
        <title>Anomalous behavior of human leukocyte interferon subtypes on polyacrylamide gel electrophoresis in the presence of dodecyl sulfate.</title>
        <authorList>
            <person name="Ohara O."/>
            <person name="Teraoka H."/>
        </authorList>
    </citation>
    <scope>NUCLEOTIDE SEQUENCE [MRNA] OF 24-189</scope>
    <source>
        <tissue>Lymphoblast</tissue>
    </source>
</reference>
<reference key="8">
    <citation type="journal article" date="1992" name="J. Biol. Chem.">
        <title>Purification and characterization of multiple components of human lymphoblastoid interferon-alpha.</title>
        <authorList>
            <person name="Zoon K.C."/>
            <person name="Miller D."/>
            <person name="Bekisz J."/>
            <person name="zur Nedden D."/>
            <person name="Enterline J.C."/>
            <person name="Nguyen N.Y."/>
            <person name="Hu R.-Q."/>
        </authorList>
    </citation>
    <scope>PROTEIN SEQUENCE OF 24-62</scope>
    <scope>FUNCTION</scope>
</reference>
<reference key="9">
    <citation type="journal article" date="1998" name="Biochem. J.">
        <title>Identification of nine interferon-alpha subtypes produced by Sendai virus-induced human peripheral blood leucocytes.</title>
        <authorList>
            <person name="Nyman T.A."/>
            <person name="Toeloe H."/>
            <person name="Parkkinen J."/>
            <person name="Kalkkinen N."/>
        </authorList>
    </citation>
    <scope>PROTEIN SEQUENCE OF 24-58</scope>
</reference>
<reference key="10">
    <citation type="journal article" date="1996" name="J. Interferon Cytokine Res.">
        <title>Identification of interferon-alpha 7, -alpha 14, and -alpha 21 variants in the genome of a large human population.</title>
        <authorList>
            <person name="Hussain M."/>
            <person name="Gill D.S."/>
            <person name="Liao M.-J."/>
        </authorList>
    </citation>
    <scope>ABSENCE OF POLYMORPHISM</scope>
</reference>
<comment type="function">
    <text evidence="2">Produced by macrophages, IFN-alpha have antiviral activities. Interferon stimulates the production of two enzymes: a protein kinase and an oligoadenylate synthetase.</text>
</comment>
<comment type="interaction">
    <interactant intactId="EBI-21706776">
        <id>P01568</id>
    </interactant>
    <interactant intactId="EBI-20857228">
        <id>Q9Y2G3</id>
        <label>ATP11B</label>
    </interactant>
    <organismsDiffer>false</organismsDiffer>
    <experiments>2</experiments>
</comment>
<comment type="interaction">
    <interactant intactId="EBI-21706776">
        <id>P01568</id>
    </interactant>
    <interactant intactId="EBI-12958227">
        <id>Q86W67</id>
        <label>FAM228A</label>
    </interactant>
    <organismsDiffer>false</organismsDiffer>
    <experiments>2</experiments>
</comment>
<comment type="subcellular location">
    <subcellularLocation>
        <location>Secreted</location>
    </subcellularLocation>
</comment>
<comment type="similarity">
    <text evidence="5">Belongs to the alpha/beta interferon family.</text>
</comment>
<comment type="sequence caution" evidence="5">
    <conflict type="erroneous initiation">
        <sequence resource="EMBL-CDS" id="AAA36041"/>
    </conflict>
</comment>
<keyword id="KW-0051">Antiviral defense</keyword>
<keyword id="KW-0202">Cytokine</keyword>
<keyword id="KW-0903">Direct protein sequencing</keyword>
<keyword id="KW-1015">Disulfide bond</keyword>
<keyword id="KW-1185">Reference proteome</keyword>
<keyword id="KW-0964">Secreted</keyword>
<keyword id="KW-0732">Signal</keyword>
<name>IFN21_HUMAN</name>
<feature type="signal peptide" evidence="2 4">
    <location>
        <begin position="1"/>
        <end position="23"/>
    </location>
</feature>
<feature type="chain" id="PRO_0000016370" description="Interferon alpha-21">
    <location>
        <begin position="24"/>
        <end position="189"/>
    </location>
</feature>
<feature type="disulfide bond" evidence="1">
    <location>
        <begin position="24"/>
        <end position="122"/>
    </location>
</feature>
<feature type="disulfide bond" evidence="1">
    <location>
        <begin position="52"/>
        <end position="162"/>
    </location>
</feature>
<feature type="sequence variant" id="VAR_055325" description="In dbSNP:rs1053885." evidence="3">
    <original>L</original>
    <variation>M</variation>
    <location>
        <position position="119"/>
    </location>
</feature>
<feature type="sequence variant" id="VAR_049638" description="In dbSNP:rs3750478.">
    <original>K</original>
    <variation>E</variation>
    <location>
        <position position="179"/>
    </location>
</feature>
<feature type="sequence conflict" description="In Ref. 8; AA sequence." evidence="5" ref="8">
    <original>G</original>
    <variation>E</variation>
    <location>
        <position position="60"/>
    </location>
</feature>
<gene>
    <name type="primary">IFNA21</name>
</gene>
<accession>P01568</accession>
<accession>Q14608</accession>
<accession>Q5VWD1</accession>
<accession>Q7M4Q4</accession>
<sequence>MALSFSLLMAVLVLSYKSICSLGCDLPQTHSLGNRRALILLAQMGRISPFSCLKDRHDFGFPQEEFDGNQFQKAQAISVLHEMIQQTFNLFSTKDSSATWEQSLLEKFSTELNQQLNDLEACVIQEVGVEETPLMNVDSILAVKKYFQRITLYLTEKKYSPCAWEVVRAEIMRSFSLSKIFQERLRRKE</sequence>
<organism>
    <name type="scientific">Homo sapiens</name>
    <name type="common">Human</name>
    <dbReference type="NCBI Taxonomy" id="9606"/>
    <lineage>
        <taxon>Eukaryota</taxon>
        <taxon>Metazoa</taxon>
        <taxon>Chordata</taxon>
        <taxon>Craniata</taxon>
        <taxon>Vertebrata</taxon>
        <taxon>Euteleostomi</taxon>
        <taxon>Mammalia</taxon>
        <taxon>Eutheria</taxon>
        <taxon>Euarchontoglires</taxon>
        <taxon>Primates</taxon>
        <taxon>Haplorrhini</taxon>
        <taxon>Catarrhini</taxon>
        <taxon>Hominidae</taxon>
        <taxon>Homo</taxon>
    </lineage>
</organism>
<evidence type="ECO:0000250" key="1"/>
<evidence type="ECO:0000269" key="2">
    <source>
    </source>
</evidence>
<evidence type="ECO:0000269" key="3">
    <source>
    </source>
</evidence>
<evidence type="ECO:0000269" key="4">
    <source>
    </source>
</evidence>
<evidence type="ECO:0000305" key="5"/>
<dbReference type="EMBL" id="V00540">
    <property type="protein sequence ID" value="CAA23801.1"/>
    <property type="molecule type" value="mRNA"/>
</dbReference>
<dbReference type="EMBL" id="M12350">
    <property type="protein sequence ID" value="AAA52718.1"/>
    <property type="molecule type" value="mRNA"/>
</dbReference>
<dbReference type="EMBL" id="X00145">
    <property type="protein sequence ID" value="CAA24980.1"/>
    <property type="molecule type" value="mRNA"/>
</dbReference>
<dbReference type="EMBL" id="M28586">
    <property type="protein sequence ID" value="AAA36041.1"/>
    <property type="status" value="ALT_INIT"/>
    <property type="molecule type" value="mRNA"/>
</dbReference>
<dbReference type="EMBL" id="AL390882">
    <property type="status" value="NOT_ANNOTATED_CDS"/>
    <property type="molecule type" value="Genomic_DNA"/>
</dbReference>
<dbReference type="EMBL" id="CH471071">
    <property type="protein sequence ID" value="EAW58623.1"/>
    <property type="molecule type" value="Genomic_DNA"/>
</dbReference>
<dbReference type="EMBL" id="BC069329">
    <property type="protein sequence ID" value="AAH69329.1"/>
    <property type="molecule type" value="mRNA"/>
</dbReference>
<dbReference type="EMBL" id="BC069372">
    <property type="protein sequence ID" value="AAH69372.1"/>
    <property type="molecule type" value="mRNA"/>
</dbReference>
<dbReference type="EMBL" id="BC069408">
    <property type="protein sequence ID" value="AAH69408.1"/>
    <property type="molecule type" value="mRNA"/>
</dbReference>
<dbReference type="EMBL" id="BC096699">
    <property type="protein sequence ID" value="AAH96699.1"/>
    <property type="molecule type" value="mRNA"/>
</dbReference>
<dbReference type="EMBL" id="BC101638">
    <property type="protein sequence ID" value="AAI01639.1"/>
    <property type="molecule type" value="mRNA"/>
</dbReference>
<dbReference type="EMBL" id="BC101640">
    <property type="protein sequence ID" value="AAI01641.1"/>
    <property type="molecule type" value="mRNA"/>
</dbReference>
<dbReference type="CCDS" id="CCDS6497.1"/>
<dbReference type="PIR" id="A01832">
    <property type="entry name" value="IVHUF"/>
</dbReference>
<dbReference type="PIR" id="D42753">
    <property type="entry name" value="D42753"/>
</dbReference>
<dbReference type="PIR" id="E25843">
    <property type="entry name" value="E25843"/>
</dbReference>
<dbReference type="PIR" id="I56313">
    <property type="entry name" value="I56313"/>
</dbReference>
<dbReference type="PIR" id="I84464">
    <property type="entry name" value="I84464"/>
</dbReference>
<dbReference type="RefSeq" id="NP_002166.2">
    <property type="nucleotide sequence ID" value="NM_002175.2"/>
</dbReference>
<dbReference type="SMR" id="P01568"/>
<dbReference type="BioGRID" id="109674">
    <property type="interactions" value="32"/>
</dbReference>
<dbReference type="ComplexPortal" id="CPX-6006">
    <property type="entry name" value="Interferon alpha receptor-ligand complex, IFNA21 variant"/>
</dbReference>
<dbReference type="FunCoup" id="P01568">
    <property type="interactions" value="982"/>
</dbReference>
<dbReference type="IntAct" id="P01568">
    <property type="interactions" value="29"/>
</dbReference>
<dbReference type="STRING" id="9606.ENSP00000369574"/>
<dbReference type="ChEMBL" id="CHEMBL3856161"/>
<dbReference type="iPTMnet" id="P01568"/>
<dbReference type="PhosphoSitePlus" id="P01568"/>
<dbReference type="BioMuta" id="IFNA21"/>
<dbReference type="DMDM" id="20178289"/>
<dbReference type="MassIVE" id="P01568"/>
<dbReference type="PaxDb" id="9606-ENSP00000369574"/>
<dbReference type="PeptideAtlas" id="P01568"/>
<dbReference type="ABCD" id="P01568">
    <property type="antibodies" value="2 sequenced antibodies"/>
</dbReference>
<dbReference type="Antibodypedia" id="24851">
    <property type="antibodies" value="121 antibodies from 16 providers"/>
</dbReference>
<dbReference type="DNASU" id="3452"/>
<dbReference type="Ensembl" id="ENST00000380225.1">
    <property type="protein sequence ID" value="ENSP00000369574.1"/>
    <property type="gene ID" value="ENSG00000137080.4"/>
</dbReference>
<dbReference type="GeneID" id="3452"/>
<dbReference type="KEGG" id="hsa:3452"/>
<dbReference type="MANE-Select" id="ENST00000380225.1">
    <property type="protein sequence ID" value="ENSP00000369574.1"/>
    <property type="RefSeq nucleotide sequence ID" value="NM_002175.2"/>
    <property type="RefSeq protein sequence ID" value="NP_002166.2"/>
</dbReference>
<dbReference type="UCSC" id="uc003zom.2">
    <property type="organism name" value="human"/>
</dbReference>
<dbReference type="AGR" id="HGNC:5424"/>
<dbReference type="CTD" id="3452"/>
<dbReference type="DisGeNET" id="3452"/>
<dbReference type="GeneCards" id="IFNA21"/>
<dbReference type="HGNC" id="HGNC:5424">
    <property type="gene designation" value="IFNA21"/>
</dbReference>
<dbReference type="HPA" id="ENSG00000137080">
    <property type="expression patterns" value="Not detected"/>
</dbReference>
<dbReference type="MIM" id="147584">
    <property type="type" value="gene"/>
</dbReference>
<dbReference type="neXtProt" id="NX_P01568"/>
<dbReference type="OpenTargets" id="ENSG00000137080"/>
<dbReference type="PharmGKB" id="PA29663"/>
<dbReference type="VEuPathDB" id="HostDB:ENSG00000137080"/>
<dbReference type="eggNOG" id="ENOG502SQAC">
    <property type="taxonomic scope" value="Eukaryota"/>
</dbReference>
<dbReference type="GeneTree" id="ENSGT01000000214430"/>
<dbReference type="HOGENOM" id="CLU_109427_0_0_1"/>
<dbReference type="InParanoid" id="P01568"/>
<dbReference type="OMA" id="KYSSAAW"/>
<dbReference type="OrthoDB" id="9526363at2759"/>
<dbReference type="PAN-GO" id="P01568">
    <property type="GO annotations" value="12 GO annotations based on evolutionary models"/>
</dbReference>
<dbReference type="PhylomeDB" id="P01568"/>
<dbReference type="TreeFam" id="TF336177"/>
<dbReference type="PathwayCommons" id="P01568"/>
<dbReference type="Reactome" id="R-HSA-909733">
    <property type="pathway name" value="Interferon alpha/beta signaling"/>
</dbReference>
<dbReference type="Reactome" id="R-HSA-912694">
    <property type="pathway name" value="Regulation of IFNA/IFNB signaling"/>
</dbReference>
<dbReference type="Reactome" id="R-HSA-933541">
    <property type="pathway name" value="TRAF6 mediated IRF7 activation"/>
</dbReference>
<dbReference type="Reactome" id="R-HSA-9705671">
    <property type="pathway name" value="SARS-CoV-2 activates/modulates innate and adaptive immune responses"/>
</dbReference>
<dbReference type="Reactome" id="R-HSA-983231">
    <property type="pathway name" value="Factors involved in megakaryocyte development and platelet production"/>
</dbReference>
<dbReference type="Reactome" id="R-HSA-9833109">
    <property type="pathway name" value="Evasion by RSV of host interferon responses"/>
</dbReference>
<dbReference type="SignaLink" id="P01568"/>
<dbReference type="BioGRID-ORCS" id="3452">
    <property type="hits" value="71 hits in 1047 CRISPR screens"/>
</dbReference>
<dbReference type="GeneWiki" id="IFNA21"/>
<dbReference type="GenomeRNAi" id="3452"/>
<dbReference type="Pharos" id="P01568">
    <property type="development level" value="Tbio"/>
</dbReference>
<dbReference type="PRO" id="PR:P01568"/>
<dbReference type="Proteomes" id="UP000005640">
    <property type="component" value="Chromosome 9"/>
</dbReference>
<dbReference type="RNAct" id="P01568">
    <property type="molecule type" value="protein"/>
</dbReference>
<dbReference type="Bgee" id="ENSG00000137080">
    <property type="expression patterns" value="Expressed in cerebellar hemisphere and 17 other cell types or tissues"/>
</dbReference>
<dbReference type="GO" id="GO:0005576">
    <property type="term" value="C:extracellular region"/>
    <property type="evidence" value="ECO:0000304"/>
    <property type="project" value="Reactome"/>
</dbReference>
<dbReference type="GO" id="GO:0005615">
    <property type="term" value="C:extracellular space"/>
    <property type="evidence" value="ECO:0000318"/>
    <property type="project" value="GO_Central"/>
</dbReference>
<dbReference type="GO" id="GO:0005125">
    <property type="term" value="F:cytokine activity"/>
    <property type="evidence" value="ECO:0000318"/>
    <property type="project" value="GO_Central"/>
</dbReference>
<dbReference type="GO" id="GO:0005126">
    <property type="term" value="F:cytokine receptor binding"/>
    <property type="evidence" value="ECO:0000304"/>
    <property type="project" value="ProtInc"/>
</dbReference>
<dbReference type="GO" id="GO:0005132">
    <property type="term" value="F:type I interferon receptor binding"/>
    <property type="evidence" value="ECO:0000318"/>
    <property type="project" value="GO_Central"/>
</dbReference>
<dbReference type="GO" id="GO:0002250">
    <property type="term" value="P:adaptive immune response"/>
    <property type="evidence" value="ECO:0000318"/>
    <property type="project" value="GO_Central"/>
</dbReference>
<dbReference type="GO" id="GO:0002312">
    <property type="term" value="P:B cell activation involved in immune response"/>
    <property type="evidence" value="ECO:0000318"/>
    <property type="project" value="GO_Central"/>
</dbReference>
<dbReference type="GO" id="GO:0098586">
    <property type="term" value="P:cellular response to virus"/>
    <property type="evidence" value="ECO:0000303"/>
    <property type="project" value="ComplexPortal"/>
</dbReference>
<dbReference type="GO" id="GO:0051607">
    <property type="term" value="P:defense response to virus"/>
    <property type="evidence" value="ECO:0007669"/>
    <property type="project" value="UniProtKB-KW"/>
</dbReference>
<dbReference type="GO" id="GO:0006959">
    <property type="term" value="P:humoral immune response"/>
    <property type="evidence" value="ECO:0000318"/>
    <property type="project" value="GO_Central"/>
</dbReference>
<dbReference type="GO" id="GO:0002323">
    <property type="term" value="P:natural killer cell activation involved in immune response"/>
    <property type="evidence" value="ECO:0000318"/>
    <property type="project" value="GO_Central"/>
</dbReference>
<dbReference type="GO" id="GO:0043330">
    <property type="term" value="P:response to exogenous dsRNA"/>
    <property type="evidence" value="ECO:0000318"/>
    <property type="project" value="GO_Central"/>
</dbReference>
<dbReference type="GO" id="GO:0002286">
    <property type="term" value="P:T cell activation involved in immune response"/>
    <property type="evidence" value="ECO:0000318"/>
    <property type="project" value="GO_Central"/>
</dbReference>
<dbReference type="GO" id="GO:0060337">
    <property type="term" value="P:type I interferon-mediated signaling pathway"/>
    <property type="evidence" value="ECO:0000318"/>
    <property type="project" value="GO_Central"/>
</dbReference>
<dbReference type="CDD" id="cd00095">
    <property type="entry name" value="IFab"/>
    <property type="match status" value="1"/>
</dbReference>
<dbReference type="FunFam" id="1.20.1250.10:FF:000001">
    <property type="entry name" value="Interferon alpha"/>
    <property type="match status" value="1"/>
</dbReference>
<dbReference type="Gene3D" id="1.20.1250.10">
    <property type="match status" value="1"/>
</dbReference>
<dbReference type="InterPro" id="IPR009079">
    <property type="entry name" value="4_helix_cytokine-like_core"/>
</dbReference>
<dbReference type="InterPro" id="IPR000471">
    <property type="entry name" value="Interferon_alpha/beta/delta"/>
</dbReference>
<dbReference type="PANTHER" id="PTHR11691:SF57">
    <property type="entry name" value="INTERFERON ALPHA-21"/>
    <property type="match status" value="1"/>
</dbReference>
<dbReference type="PANTHER" id="PTHR11691">
    <property type="entry name" value="TYPE I INTERFERON"/>
    <property type="match status" value="1"/>
</dbReference>
<dbReference type="Pfam" id="PF00143">
    <property type="entry name" value="Interferon"/>
    <property type="match status" value="1"/>
</dbReference>
<dbReference type="PRINTS" id="PR00266">
    <property type="entry name" value="INTERFERONAB"/>
</dbReference>
<dbReference type="SMART" id="SM00076">
    <property type="entry name" value="IFabd"/>
    <property type="match status" value="1"/>
</dbReference>
<dbReference type="SUPFAM" id="SSF47266">
    <property type="entry name" value="4-helical cytokines"/>
    <property type="match status" value="1"/>
</dbReference>
<dbReference type="PROSITE" id="PS00252">
    <property type="entry name" value="INTERFERON_A_B_D"/>
    <property type="match status" value="1"/>
</dbReference>
<proteinExistence type="evidence at protein level"/>